<reference key="1">
    <citation type="journal article" date="2008" name="PLoS ONE">
        <title>Survival in nuclear waste, extreme resistance, and potential applications gleaned from the genome sequence of Kineococcus radiotolerans SRS30216.</title>
        <authorList>
            <person name="Bagwell C.E."/>
            <person name="Bhat S."/>
            <person name="Hawkins G.M."/>
            <person name="Smith B.W."/>
            <person name="Biswas T."/>
            <person name="Hoover T.R."/>
            <person name="Saunders E."/>
            <person name="Han C.S."/>
            <person name="Tsodikov O.V."/>
            <person name="Shimkets L.J."/>
        </authorList>
    </citation>
    <scope>NUCLEOTIDE SEQUENCE [LARGE SCALE GENOMIC DNA]</scope>
    <source>
        <strain>ATCC BAA-149 / DSM 14245 / SRS30216</strain>
    </source>
</reference>
<evidence type="ECO:0000255" key="1">
    <source>
        <dbReference type="HAMAP-Rule" id="MF_00276"/>
    </source>
</evidence>
<evidence type="ECO:0000256" key="2">
    <source>
        <dbReference type="SAM" id="MobiDB-lite"/>
    </source>
</evidence>
<proteinExistence type="inferred from homology"/>
<sequence>MSLALTNLLRQARTGLLLLLVATAGLGLVYPLAVFAVGRLVPARADGQVVAVDGQPVGSRLIGQEFPGEQWFQPRPSAAGDGYDPTASGASNLGPESTDLLKAVEERRAAVAAADGTAPVDVAPDALTASGSGLDPHVSPENARRQVARVAAARGLSEQRVAALVAEHTRGRALGFLGEPTVNVLELNLALRSAAP</sequence>
<gene>
    <name evidence="1" type="primary">kdpC</name>
    <name type="ordered locus">Krad_1018</name>
</gene>
<dbReference type="EMBL" id="CP000750">
    <property type="protein sequence ID" value="ABS02506.1"/>
    <property type="molecule type" value="Genomic_DNA"/>
</dbReference>
<dbReference type="RefSeq" id="WP_012084642.1">
    <property type="nucleotide sequence ID" value="NC_009664.2"/>
</dbReference>
<dbReference type="SMR" id="A6W6R7"/>
<dbReference type="STRING" id="266940.Krad_1018"/>
<dbReference type="KEGG" id="kra:Krad_1018"/>
<dbReference type="eggNOG" id="COG2156">
    <property type="taxonomic scope" value="Bacteria"/>
</dbReference>
<dbReference type="HOGENOM" id="CLU_077094_0_0_11"/>
<dbReference type="OrthoDB" id="9788285at2"/>
<dbReference type="Proteomes" id="UP000001116">
    <property type="component" value="Chromosome"/>
</dbReference>
<dbReference type="GO" id="GO:0005886">
    <property type="term" value="C:plasma membrane"/>
    <property type="evidence" value="ECO:0007669"/>
    <property type="project" value="UniProtKB-SubCell"/>
</dbReference>
<dbReference type="GO" id="GO:0005524">
    <property type="term" value="F:ATP binding"/>
    <property type="evidence" value="ECO:0007669"/>
    <property type="project" value="UniProtKB-UniRule"/>
</dbReference>
<dbReference type="GO" id="GO:0008556">
    <property type="term" value="F:P-type potassium transmembrane transporter activity"/>
    <property type="evidence" value="ECO:0007669"/>
    <property type="project" value="InterPro"/>
</dbReference>
<dbReference type="HAMAP" id="MF_00276">
    <property type="entry name" value="KdpC"/>
    <property type="match status" value="1"/>
</dbReference>
<dbReference type="InterPro" id="IPR003820">
    <property type="entry name" value="KdpC"/>
</dbReference>
<dbReference type="NCBIfam" id="TIGR00681">
    <property type="entry name" value="kdpC"/>
    <property type="match status" value="1"/>
</dbReference>
<dbReference type="NCBIfam" id="NF001454">
    <property type="entry name" value="PRK00315.1"/>
    <property type="match status" value="1"/>
</dbReference>
<dbReference type="PANTHER" id="PTHR30042">
    <property type="entry name" value="POTASSIUM-TRANSPORTING ATPASE C CHAIN"/>
    <property type="match status" value="1"/>
</dbReference>
<dbReference type="PANTHER" id="PTHR30042:SF2">
    <property type="entry name" value="POTASSIUM-TRANSPORTING ATPASE KDPC SUBUNIT"/>
    <property type="match status" value="1"/>
</dbReference>
<dbReference type="Pfam" id="PF02669">
    <property type="entry name" value="KdpC"/>
    <property type="match status" value="1"/>
</dbReference>
<dbReference type="PIRSF" id="PIRSF001296">
    <property type="entry name" value="K_ATPase_KdpC"/>
    <property type="match status" value="1"/>
</dbReference>
<protein>
    <recommendedName>
        <fullName evidence="1">Potassium-transporting ATPase KdpC subunit</fullName>
    </recommendedName>
    <alternativeName>
        <fullName evidence="1">ATP phosphohydrolase [potassium-transporting] C chain</fullName>
    </alternativeName>
    <alternativeName>
        <fullName evidence="1">Potassium-binding and translocating subunit C</fullName>
    </alternativeName>
    <alternativeName>
        <fullName evidence="1">Potassium-translocating ATPase C chain</fullName>
    </alternativeName>
</protein>
<accession>A6W6R7</accession>
<name>KDPC_KINRD</name>
<feature type="chain" id="PRO_1000078797" description="Potassium-transporting ATPase KdpC subunit">
    <location>
        <begin position="1"/>
        <end position="196"/>
    </location>
</feature>
<feature type="transmembrane region" description="Helical" evidence="1">
    <location>
        <begin position="17"/>
        <end position="37"/>
    </location>
</feature>
<feature type="region of interest" description="Disordered" evidence="2">
    <location>
        <begin position="73"/>
        <end position="93"/>
    </location>
</feature>
<organism>
    <name type="scientific">Kineococcus radiotolerans (strain ATCC BAA-149 / DSM 14245 / SRS30216)</name>
    <dbReference type="NCBI Taxonomy" id="266940"/>
    <lineage>
        <taxon>Bacteria</taxon>
        <taxon>Bacillati</taxon>
        <taxon>Actinomycetota</taxon>
        <taxon>Actinomycetes</taxon>
        <taxon>Kineosporiales</taxon>
        <taxon>Kineosporiaceae</taxon>
        <taxon>Kineococcus</taxon>
    </lineage>
</organism>
<comment type="function">
    <text evidence="1">Part of the high-affinity ATP-driven potassium transport (or Kdp) system, which catalyzes the hydrolysis of ATP coupled with the electrogenic transport of potassium into the cytoplasm. This subunit acts as a catalytic chaperone that increases the ATP-binding affinity of the ATP-hydrolyzing subunit KdpB by the formation of a transient KdpB/KdpC/ATP ternary complex.</text>
</comment>
<comment type="subunit">
    <text evidence="1">The system is composed of three essential subunits: KdpA, KdpB and KdpC.</text>
</comment>
<comment type="subcellular location">
    <subcellularLocation>
        <location evidence="1">Cell membrane</location>
        <topology evidence="1">Single-pass membrane protein</topology>
    </subcellularLocation>
</comment>
<comment type="similarity">
    <text evidence="1">Belongs to the KdpC family.</text>
</comment>
<keyword id="KW-0067">ATP-binding</keyword>
<keyword id="KW-1003">Cell membrane</keyword>
<keyword id="KW-0406">Ion transport</keyword>
<keyword id="KW-0472">Membrane</keyword>
<keyword id="KW-0547">Nucleotide-binding</keyword>
<keyword id="KW-0630">Potassium</keyword>
<keyword id="KW-0633">Potassium transport</keyword>
<keyword id="KW-1185">Reference proteome</keyword>
<keyword id="KW-0812">Transmembrane</keyword>
<keyword id="KW-1133">Transmembrane helix</keyword>
<keyword id="KW-0813">Transport</keyword>